<sequence>MTEQVQANETETPVAVADERIIRETGIDAKVAGIVEPVINTLGFRLVRVRLSGLNGQTLQIMAERPDGTMTVDDCELVSRTVAPVLDVEDPISGKYHLEISSPGIDRPLVRKSDFSDWAGHIAKVETSIVHEGRKKFRGRIVVGEADSVTIESDQISYGNEPVVRIPFDLISDARLVLTDDLIRDALRKDKALREGRIPGDDLGAEPEDVASTETQEKK</sequence>
<dbReference type="EMBL" id="CP000887">
    <property type="protein sequence ID" value="ACD73505.1"/>
    <property type="molecule type" value="Genomic_DNA"/>
</dbReference>
<dbReference type="RefSeq" id="WP_002967047.1">
    <property type="nucleotide sequence ID" value="NC_010742.1"/>
</dbReference>
<dbReference type="SMR" id="B2S9F3"/>
<dbReference type="GeneID" id="93017536"/>
<dbReference type="KEGG" id="bmc:BAbS19_I20230"/>
<dbReference type="HOGENOM" id="CLU_070525_0_1_5"/>
<dbReference type="Proteomes" id="UP000002565">
    <property type="component" value="Chromosome 1"/>
</dbReference>
<dbReference type="GO" id="GO:0005829">
    <property type="term" value="C:cytosol"/>
    <property type="evidence" value="ECO:0007669"/>
    <property type="project" value="TreeGrafter"/>
</dbReference>
<dbReference type="GO" id="GO:0000028">
    <property type="term" value="P:ribosomal small subunit assembly"/>
    <property type="evidence" value="ECO:0007669"/>
    <property type="project" value="TreeGrafter"/>
</dbReference>
<dbReference type="GO" id="GO:0006412">
    <property type="term" value="P:translation"/>
    <property type="evidence" value="ECO:0007669"/>
    <property type="project" value="TreeGrafter"/>
</dbReference>
<dbReference type="CDD" id="cd01734">
    <property type="entry name" value="YlxS_C"/>
    <property type="match status" value="1"/>
</dbReference>
<dbReference type="Gene3D" id="3.30.300.70">
    <property type="entry name" value="RimP-like superfamily, N-terminal"/>
    <property type="match status" value="1"/>
</dbReference>
<dbReference type="HAMAP" id="MF_01077">
    <property type="entry name" value="RimP"/>
    <property type="match status" value="1"/>
</dbReference>
<dbReference type="InterPro" id="IPR003728">
    <property type="entry name" value="Ribosome_maturation_RimP"/>
</dbReference>
<dbReference type="InterPro" id="IPR028998">
    <property type="entry name" value="RimP_C"/>
</dbReference>
<dbReference type="InterPro" id="IPR036847">
    <property type="entry name" value="RimP_C_sf"/>
</dbReference>
<dbReference type="InterPro" id="IPR028989">
    <property type="entry name" value="RimP_N"/>
</dbReference>
<dbReference type="InterPro" id="IPR035956">
    <property type="entry name" value="RimP_N_sf"/>
</dbReference>
<dbReference type="NCBIfam" id="NF000932">
    <property type="entry name" value="PRK00092.2-5"/>
    <property type="match status" value="1"/>
</dbReference>
<dbReference type="PANTHER" id="PTHR33867">
    <property type="entry name" value="RIBOSOME MATURATION FACTOR RIMP"/>
    <property type="match status" value="1"/>
</dbReference>
<dbReference type="PANTHER" id="PTHR33867:SF1">
    <property type="entry name" value="RIBOSOME MATURATION FACTOR RIMP"/>
    <property type="match status" value="1"/>
</dbReference>
<dbReference type="Pfam" id="PF17384">
    <property type="entry name" value="DUF150_C"/>
    <property type="match status" value="1"/>
</dbReference>
<dbReference type="Pfam" id="PF02576">
    <property type="entry name" value="RimP_N"/>
    <property type="match status" value="1"/>
</dbReference>
<dbReference type="SUPFAM" id="SSF74942">
    <property type="entry name" value="YhbC-like, C-terminal domain"/>
    <property type="match status" value="1"/>
</dbReference>
<dbReference type="SUPFAM" id="SSF75420">
    <property type="entry name" value="YhbC-like, N-terminal domain"/>
    <property type="match status" value="1"/>
</dbReference>
<gene>
    <name evidence="1" type="primary">rimP</name>
    <name type="ordered locus">BAbS19_I20230</name>
</gene>
<comment type="function">
    <text evidence="1">Required for maturation of 30S ribosomal subunits.</text>
</comment>
<comment type="subcellular location">
    <subcellularLocation>
        <location evidence="1">Cytoplasm</location>
    </subcellularLocation>
</comment>
<comment type="similarity">
    <text evidence="1">Belongs to the RimP family.</text>
</comment>
<proteinExistence type="inferred from homology"/>
<keyword id="KW-0963">Cytoplasm</keyword>
<keyword id="KW-0690">Ribosome biogenesis</keyword>
<evidence type="ECO:0000255" key="1">
    <source>
        <dbReference type="HAMAP-Rule" id="MF_01077"/>
    </source>
</evidence>
<evidence type="ECO:0000256" key="2">
    <source>
        <dbReference type="SAM" id="MobiDB-lite"/>
    </source>
</evidence>
<organism>
    <name type="scientific">Brucella abortus (strain S19)</name>
    <dbReference type="NCBI Taxonomy" id="430066"/>
    <lineage>
        <taxon>Bacteria</taxon>
        <taxon>Pseudomonadati</taxon>
        <taxon>Pseudomonadota</taxon>
        <taxon>Alphaproteobacteria</taxon>
        <taxon>Hyphomicrobiales</taxon>
        <taxon>Brucellaceae</taxon>
        <taxon>Brucella/Ochrobactrum group</taxon>
        <taxon>Brucella</taxon>
    </lineage>
</organism>
<protein>
    <recommendedName>
        <fullName evidence="1">Ribosome maturation factor RimP</fullName>
    </recommendedName>
</protein>
<accession>B2S9F3</accession>
<name>RIMP_BRUA1</name>
<feature type="chain" id="PRO_0000384617" description="Ribosome maturation factor RimP">
    <location>
        <begin position="1"/>
        <end position="219"/>
    </location>
</feature>
<feature type="region of interest" description="Disordered" evidence="2">
    <location>
        <begin position="195"/>
        <end position="219"/>
    </location>
</feature>
<reference key="1">
    <citation type="journal article" date="2008" name="PLoS ONE">
        <title>Genome sequence of Brucella abortus vaccine strain S19 compared to virulent strains yields candidate virulence genes.</title>
        <authorList>
            <person name="Crasta O.R."/>
            <person name="Folkerts O."/>
            <person name="Fei Z."/>
            <person name="Mane S.P."/>
            <person name="Evans C."/>
            <person name="Martino-Catt S."/>
            <person name="Bricker B."/>
            <person name="Yu G."/>
            <person name="Du L."/>
            <person name="Sobral B.W."/>
        </authorList>
    </citation>
    <scope>NUCLEOTIDE SEQUENCE [LARGE SCALE GENOMIC DNA]</scope>
    <source>
        <strain>S19</strain>
    </source>
</reference>